<organism>
    <name type="scientific">Bufo japonicus</name>
    <name type="common">Japanese common toad</name>
    <name type="synonym">Bufo praetextatus</name>
    <dbReference type="NCBI Taxonomy" id="8387"/>
    <lineage>
        <taxon>Eukaryota</taxon>
        <taxon>Metazoa</taxon>
        <taxon>Chordata</taxon>
        <taxon>Craniata</taxon>
        <taxon>Vertebrata</taxon>
        <taxon>Euteleostomi</taxon>
        <taxon>Amphibia</taxon>
        <taxon>Batrachia</taxon>
        <taxon>Anura</taxon>
        <taxon>Neobatrachia</taxon>
        <taxon>Hyloidea</taxon>
        <taxon>Bufonidae</taxon>
        <taxon>Bufo</taxon>
    </lineage>
</organism>
<feature type="signal peptide">
    <location>
        <begin position="1"/>
        <end position="19"/>
    </location>
</feature>
<feature type="peptide" id="PRO_0000020530" description="Mesotocin">
    <location>
        <begin position="20"/>
        <end position="28"/>
    </location>
</feature>
<feature type="chain" id="PRO_0000020531" description="Neurophysin MT">
    <location>
        <begin position="32"/>
        <end position="125"/>
    </location>
</feature>
<feature type="modified residue" description="Glycine amide" evidence="1">
    <location>
        <position position="28"/>
    </location>
</feature>
<feature type="disulfide bond" evidence="2">
    <location>
        <begin position="20"/>
        <end position="25"/>
    </location>
</feature>
<feature type="disulfide bond" evidence="2">
    <location>
        <begin position="42"/>
        <end position="86"/>
    </location>
</feature>
<feature type="disulfide bond" evidence="2">
    <location>
        <begin position="45"/>
        <end position="59"/>
    </location>
</feature>
<feature type="disulfide bond" evidence="2">
    <location>
        <begin position="53"/>
        <end position="76"/>
    </location>
</feature>
<feature type="disulfide bond" evidence="2">
    <location>
        <begin position="60"/>
        <end position="66"/>
    </location>
</feature>
<feature type="disulfide bond" evidence="2">
    <location>
        <begin position="93"/>
        <end position="106"/>
    </location>
</feature>
<feature type="disulfide bond" evidence="2">
    <location>
        <begin position="100"/>
        <end position="118"/>
    </location>
</feature>
<feature type="disulfide bond" evidence="2">
    <location>
        <begin position="107"/>
        <end position="112"/>
    </location>
</feature>
<keyword id="KW-0027">Amidation</keyword>
<keyword id="KW-0165">Cleavage on pair of basic residues</keyword>
<keyword id="KW-1015">Disulfide bond</keyword>
<keyword id="KW-0372">Hormone</keyword>
<keyword id="KW-0964">Secreted</keyword>
<keyword id="KW-0732">Signal</keyword>
<sequence length="125" mass="13516">MSYTALAVTFFGWLALSSACYIQNCPIGGKRSVIDFMDVRKCIPCGPRNKGHCFGPNICCGEELGCYFGTTETLRCQEENFLPSPCESGRKPCGNNGGNCARSGICCNHESCTMDPACEQDSVFS</sequence>
<comment type="function">
    <text>Mesotocin is a diuretic hormone.</text>
</comment>
<comment type="subcellular location">
    <subcellularLocation>
        <location>Secreted</location>
    </subcellularLocation>
</comment>
<comment type="tissue specificity">
    <text>Mesotocin is produced by magnocellular preoptic neurons in the hypothalamus in amphibians, reptiles and birds.</text>
</comment>
<comment type="similarity">
    <text evidence="3">Belongs to the vasopressin/oxytocin family.</text>
</comment>
<dbReference type="EMBL" id="M16232">
    <property type="protein sequence ID" value="AAA48555.1"/>
    <property type="molecule type" value="mRNA"/>
</dbReference>
<dbReference type="PIR" id="A29879">
    <property type="entry name" value="A29879"/>
</dbReference>
<dbReference type="SMR" id="P08162"/>
<dbReference type="GO" id="GO:0005615">
    <property type="term" value="C:extracellular space"/>
    <property type="evidence" value="ECO:0007669"/>
    <property type="project" value="TreeGrafter"/>
</dbReference>
<dbReference type="GO" id="GO:0030141">
    <property type="term" value="C:secretory granule"/>
    <property type="evidence" value="ECO:0007669"/>
    <property type="project" value="TreeGrafter"/>
</dbReference>
<dbReference type="GO" id="GO:0005185">
    <property type="term" value="F:neurohypophyseal hormone activity"/>
    <property type="evidence" value="ECO:0007669"/>
    <property type="project" value="InterPro"/>
</dbReference>
<dbReference type="FunFam" id="2.60.9.10:FF:000001">
    <property type="entry name" value="oxytocin-neurophysin 1"/>
    <property type="match status" value="1"/>
</dbReference>
<dbReference type="Gene3D" id="2.60.9.10">
    <property type="entry name" value="Neurohypophysial hormone domain"/>
    <property type="match status" value="1"/>
</dbReference>
<dbReference type="InterPro" id="IPR000981">
    <property type="entry name" value="Neurhyp_horm"/>
</dbReference>
<dbReference type="InterPro" id="IPR036387">
    <property type="entry name" value="Neurhyp_horm_dom_sf"/>
</dbReference>
<dbReference type="InterPro" id="IPR022423">
    <property type="entry name" value="Neurohypophysial_hormone_CS"/>
</dbReference>
<dbReference type="PANTHER" id="PTHR11681">
    <property type="entry name" value="NEUROPHYSIN"/>
    <property type="match status" value="1"/>
</dbReference>
<dbReference type="PANTHER" id="PTHR11681:SF9">
    <property type="entry name" value="VASOPRESSIN-NEUROPHYSIN 2-COPEPTIN"/>
    <property type="match status" value="1"/>
</dbReference>
<dbReference type="Pfam" id="PF00220">
    <property type="entry name" value="Hormone_4"/>
    <property type="match status" value="1"/>
</dbReference>
<dbReference type="Pfam" id="PF00184">
    <property type="entry name" value="Hormone_5"/>
    <property type="match status" value="1"/>
</dbReference>
<dbReference type="PIRSF" id="PIRSF001815">
    <property type="entry name" value="Nonapeptide_hormone_precursor"/>
    <property type="match status" value="1"/>
</dbReference>
<dbReference type="PRINTS" id="PR00831">
    <property type="entry name" value="NEUROPHYSIN"/>
</dbReference>
<dbReference type="SMART" id="SM00003">
    <property type="entry name" value="NH"/>
    <property type="match status" value="1"/>
</dbReference>
<dbReference type="SUPFAM" id="SSF49606">
    <property type="entry name" value="Neurophysin II"/>
    <property type="match status" value="1"/>
</dbReference>
<dbReference type="PROSITE" id="PS00264">
    <property type="entry name" value="NEUROHYPOPHYS_HORM"/>
    <property type="match status" value="1"/>
</dbReference>
<protein>
    <recommendedName>
        <fullName>Mesotocin-neurophysin MT</fullName>
    </recommendedName>
    <component>
        <recommendedName>
            <fullName>Mesotocin</fullName>
            <shortName>MT</shortName>
        </recommendedName>
    </component>
    <component>
        <recommendedName>
            <fullName>Neurophysin MT</fullName>
        </recommendedName>
    </component>
</protein>
<evidence type="ECO:0000250" key="1"/>
<evidence type="ECO:0000250" key="2">
    <source>
        <dbReference type="UniProtKB" id="P01175"/>
    </source>
</evidence>
<evidence type="ECO:0000305" key="3"/>
<name>NEUM_BUFJA</name>
<proteinExistence type="evidence at transcript level"/>
<accession>P08162</accession>
<reference key="1">
    <citation type="journal article" date="1987" name="Proc. Natl. Acad. Sci. U.S.A.">
        <title>Cloning and sequence analysis of cDNAs for neurohypophysial hormones vasotocin and mesotocin for the hypothalamus of toad, Bufo japonicus.</title>
        <authorList>
            <person name="Nojiri H."/>
            <person name="Ishida I."/>
            <person name="Miyashita E."/>
            <person name="Sato M."/>
            <person name="Urano A."/>
            <person name="Deguchi T."/>
        </authorList>
    </citation>
    <scope>NUCLEOTIDE SEQUENCE [MRNA]</scope>
</reference>